<evidence type="ECO:0000250" key="1"/>
<evidence type="ECO:0000250" key="2">
    <source>
        <dbReference type="UniProtKB" id="P29558"/>
    </source>
</evidence>
<evidence type="ECO:0000255" key="3">
    <source>
        <dbReference type="PROSITE-ProRule" id="PRU00176"/>
    </source>
</evidence>
<evidence type="ECO:0000256" key="4">
    <source>
        <dbReference type="SAM" id="MobiDB-lite"/>
    </source>
</evidence>
<evidence type="ECO:0000312" key="5">
    <source>
        <dbReference type="EMBL" id="AAH87094.1"/>
    </source>
</evidence>
<dbReference type="EMBL" id="BC087094">
    <property type="protein sequence ID" value="AAH87094.1"/>
    <property type="molecule type" value="mRNA"/>
</dbReference>
<dbReference type="RefSeq" id="NP_001012184.1">
    <property type="nucleotide sequence ID" value="NM_001012184.1"/>
</dbReference>
<dbReference type="SMR" id="Q5PQP1"/>
<dbReference type="FunCoup" id="Q5PQP1">
    <property type="interactions" value="1859"/>
</dbReference>
<dbReference type="STRING" id="10116.ENSRNOP00000011682"/>
<dbReference type="PhosphoSitePlus" id="Q5PQP1"/>
<dbReference type="PaxDb" id="10116-ENSRNOP00000011682"/>
<dbReference type="GeneID" id="362138"/>
<dbReference type="KEGG" id="rno:362138"/>
<dbReference type="UCSC" id="RGD:1307777">
    <property type="organism name" value="rat"/>
</dbReference>
<dbReference type="AGR" id="RGD:1307777"/>
<dbReference type="CTD" id="5937"/>
<dbReference type="RGD" id="1307777">
    <property type="gene designation" value="Rbms1"/>
</dbReference>
<dbReference type="VEuPathDB" id="HostDB:ENSRNOG00000008482"/>
<dbReference type="eggNOG" id="KOG4733">
    <property type="taxonomic scope" value="Eukaryota"/>
</dbReference>
<dbReference type="InParanoid" id="Q5PQP1"/>
<dbReference type="PRO" id="PR:Q5PQP1"/>
<dbReference type="Proteomes" id="UP000002494">
    <property type="component" value="Chromosome 3"/>
</dbReference>
<dbReference type="Bgee" id="ENSRNOG00000008482">
    <property type="expression patterns" value="Expressed in lung and 19 other cell types or tissues"/>
</dbReference>
<dbReference type="ExpressionAtlas" id="Q5PQP1">
    <property type="expression patterns" value="baseline and differential"/>
</dbReference>
<dbReference type="GO" id="GO:0005829">
    <property type="term" value="C:cytosol"/>
    <property type="evidence" value="ECO:0000318"/>
    <property type="project" value="GO_Central"/>
</dbReference>
<dbReference type="GO" id="GO:0005634">
    <property type="term" value="C:nucleus"/>
    <property type="evidence" value="ECO:0000318"/>
    <property type="project" value="GO_Central"/>
</dbReference>
<dbReference type="GO" id="GO:1990904">
    <property type="term" value="C:ribonucleoprotein complex"/>
    <property type="evidence" value="ECO:0000318"/>
    <property type="project" value="GO_Central"/>
</dbReference>
<dbReference type="GO" id="GO:0003677">
    <property type="term" value="F:DNA binding"/>
    <property type="evidence" value="ECO:0007669"/>
    <property type="project" value="UniProtKB-KW"/>
</dbReference>
<dbReference type="GO" id="GO:0003730">
    <property type="term" value="F:mRNA 3'-UTR binding"/>
    <property type="evidence" value="ECO:0000318"/>
    <property type="project" value="GO_Central"/>
</dbReference>
<dbReference type="GO" id="GO:0008143">
    <property type="term" value="F:poly(A) binding"/>
    <property type="evidence" value="ECO:0000318"/>
    <property type="project" value="GO_Central"/>
</dbReference>
<dbReference type="GO" id="GO:0008266">
    <property type="term" value="F:poly(U) RNA binding"/>
    <property type="evidence" value="ECO:0000318"/>
    <property type="project" value="GO_Central"/>
</dbReference>
<dbReference type="GO" id="GO:0006260">
    <property type="term" value="P:DNA replication"/>
    <property type="evidence" value="ECO:0007669"/>
    <property type="project" value="UniProtKB-KW"/>
</dbReference>
<dbReference type="CDD" id="cd12470">
    <property type="entry name" value="RRM1_MSSP1"/>
    <property type="match status" value="1"/>
</dbReference>
<dbReference type="CDD" id="cd12473">
    <property type="entry name" value="RRM2_MSSP1"/>
    <property type="match status" value="1"/>
</dbReference>
<dbReference type="FunFam" id="3.30.70.330:FF:000012">
    <property type="entry name" value="RNA-binding motif, single-stranded-interacting protein 3 isoform 1"/>
    <property type="match status" value="1"/>
</dbReference>
<dbReference type="FunFam" id="3.30.70.330:FF:000014">
    <property type="entry name" value="RNA-binding motif, single-stranded-interacting protein 3 isoform 1"/>
    <property type="match status" value="1"/>
</dbReference>
<dbReference type="Gene3D" id="3.30.70.330">
    <property type="match status" value="2"/>
</dbReference>
<dbReference type="InterPro" id="IPR002343">
    <property type="entry name" value="Hud_Sxl_RNA"/>
</dbReference>
<dbReference type="InterPro" id="IPR034404">
    <property type="entry name" value="MSSP1_RRM1"/>
</dbReference>
<dbReference type="InterPro" id="IPR012677">
    <property type="entry name" value="Nucleotide-bd_a/b_plait_sf"/>
</dbReference>
<dbReference type="InterPro" id="IPR035979">
    <property type="entry name" value="RBD_domain_sf"/>
</dbReference>
<dbReference type="InterPro" id="IPR000504">
    <property type="entry name" value="RRM_dom"/>
</dbReference>
<dbReference type="PANTHER" id="PTHR24012">
    <property type="entry name" value="RNA BINDING PROTEIN"/>
    <property type="match status" value="1"/>
</dbReference>
<dbReference type="Pfam" id="PF00076">
    <property type="entry name" value="RRM_1"/>
    <property type="match status" value="2"/>
</dbReference>
<dbReference type="PRINTS" id="PR00961">
    <property type="entry name" value="HUDSXLRNA"/>
</dbReference>
<dbReference type="SMART" id="SM00360">
    <property type="entry name" value="RRM"/>
    <property type="match status" value="2"/>
</dbReference>
<dbReference type="SUPFAM" id="SSF54928">
    <property type="entry name" value="RNA-binding domain, RBD"/>
    <property type="match status" value="2"/>
</dbReference>
<dbReference type="PROSITE" id="PS50102">
    <property type="entry name" value="RRM"/>
    <property type="match status" value="2"/>
</dbReference>
<proteinExistence type="evidence at transcript level"/>
<gene>
    <name evidence="5" type="primary">Rbms1</name>
</gene>
<comment type="function">
    <text evidence="1">Single-stranded DNA binding protein that interacts with the region upstream of the MYC gene. Binds specifically to the DNA sequence motif 5'-[AT]CT[AT][AT]T-3'. Probably has a role in DNA replication (By similarity).</text>
</comment>
<comment type="subcellular location">
    <subcellularLocation>
        <location evidence="2">Nucleus</location>
    </subcellularLocation>
</comment>
<organism>
    <name type="scientific">Rattus norvegicus</name>
    <name type="common">Rat</name>
    <dbReference type="NCBI Taxonomy" id="10116"/>
    <lineage>
        <taxon>Eukaryota</taxon>
        <taxon>Metazoa</taxon>
        <taxon>Chordata</taxon>
        <taxon>Craniata</taxon>
        <taxon>Vertebrata</taxon>
        <taxon>Euteleostomi</taxon>
        <taxon>Mammalia</taxon>
        <taxon>Eutheria</taxon>
        <taxon>Euarchontoglires</taxon>
        <taxon>Glires</taxon>
        <taxon>Rodentia</taxon>
        <taxon>Myomorpha</taxon>
        <taxon>Muroidea</taxon>
        <taxon>Muridae</taxon>
        <taxon>Murinae</taxon>
        <taxon>Rattus</taxon>
    </lineage>
</organism>
<name>RBMS1_RAT</name>
<sequence length="403" mass="44068">MGKVWKQQMYPQYATYYYPQYLQAKQSLVPAHPMAPPSPSTTSSNNNSSSSSNSGWDQLSKTNLYIRGLPPNTTDQDLVKLCQPYGKIVSTKAILDKATNKCKGYGFVDFDSPAAAQKAVSALKASGVQAQMAKQQEQDPTNLYISNLPLSMDEQELENMLKPFGQVISTRVLRDSSGTSRGVGFARMESTEKCEAVIGHFNGKFIKTPPGVSAPTEPLLCKFADGGQKKRQNPNKYIPNGRPWPREGEAGMTLTYDPTTAALHNGFYPSPYSIATNRMITQTSLTPYIASPVSAYQVQSPSWMQPQPYILQHPGAVLTPSMEHTMSLQPASMISPLAQQMSHLSLGSTGTYMPATSAMQGAYLPQYTHMQTATVPVEEASGQQQVTVETSNDHSPYTFPPNK</sequence>
<protein>
    <recommendedName>
        <fullName>RNA-binding motif, single-stranded-interacting protein 1</fullName>
    </recommendedName>
</protein>
<keyword id="KW-0235">DNA replication</keyword>
<keyword id="KW-0238">DNA-binding</keyword>
<keyword id="KW-0539">Nucleus</keyword>
<keyword id="KW-0597">Phosphoprotein</keyword>
<keyword id="KW-1185">Reference proteome</keyword>
<keyword id="KW-0677">Repeat</keyword>
<keyword id="KW-0694">RNA-binding</keyword>
<feature type="chain" id="PRO_0000293625" description="RNA-binding motif, single-stranded-interacting protein 1">
    <location>
        <begin position="1"/>
        <end position="403"/>
    </location>
</feature>
<feature type="domain" description="RRM 1" evidence="3">
    <location>
        <begin position="62"/>
        <end position="135"/>
    </location>
</feature>
<feature type="domain" description="RRM 2" evidence="3">
    <location>
        <begin position="141"/>
        <end position="226"/>
    </location>
</feature>
<feature type="region of interest" description="Disordered" evidence="4">
    <location>
        <begin position="30"/>
        <end position="56"/>
    </location>
</feature>
<feature type="compositionally biased region" description="Low complexity" evidence="4">
    <location>
        <begin position="40"/>
        <end position="54"/>
    </location>
</feature>
<feature type="modified residue" description="Phosphothreonine" evidence="2">
    <location>
        <position position="208"/>
    </location>
</feature>
<reference evidence="5" key="1">
    <citation type="journal article" date="2004" name="Genome Res.">
        <title>The status, quality, and expansion of the NIH full-length cDNA project: the Mammalian Gene Collection (MGC).</title>
        <authorList>
            <consortium name="The MGC Project Team"/>
        </authorList>
    </citation>
    <scope>NUCLEOTIDE SEQUENCE [LARGE SCALE MRNA]</scope>
    <source>
        <tissue evidence="5">Heart</tissue>
    </source>
</reference>
<accession>Q5PQP1</accession>